<gene>
    <name type="ordered locus">At4g17200</name>
    <name type="ORF">dl4635w</name>
    <name type="ORF">FCAALL.372</name>
</gene>
<reference key="1">
    <citation type="journal article" date="1998" name="Nature">
        <title>Analysis of 1.9 Mb of contiguous sequence from chromosome 4 of Arabidopsis thaliana.</title>
        <authorList>
            <person name="Bevan M."/>
            <person name="Bancroft I."/>
            <person name="Bent E."/>
            <person name="Love K."/>
            <person name="Goodman H.M."/>
            <person name="Dean C."/>
            <person name="Bergkamp R."/>
            <person name="Dirkse W."/>
            <person name="van Staveren M."/>
            <person name="Stiekema W."/>
            <person name="Drost L."/>
            <person name="Ridley P."/>
            <person name="Hudson S.-A."/>
            <person name="Patel K."/>
            <person name="Murphy G."/>
            <person name="Piffanelli P."/>
            <person name="Wedler H."/>
            <person name="Wedler E."/>
            <person name="Wambutt R."/>
            <person name="Weitzenegger T."/>
            <person name="Pohl T."/>
            <person name="Terryn N."/>
            <person name="Gielen J."/>
            <person name="Villarroel R."/>
            <person name="De Clercq R."/>
            <person name="van Montagu M."/>
            <person name="Lecharny A."/>
            <person name="Aubourg S."/>
            <person name="Gy I."/>
            <person name="Kreis M."/>
            <person name="Lao N."/>
            <person name="Kavanagh T."/>
            <person name="Hempel S."/>
            <person name="Kotter P."/>
            <person name="Entian K.-D."/>
            <person name="Rieger M."/>
            <person name="Schaefer M."/>
            <person name="Funk B."/>
            <person name="Mueller-Auer S."/>
            <person name="Silvey M."/>
            <person name="James R."/>
            <person name="Monfort A."/>
            <person name="Pons A."/>
            <person name="Puigdomenech P."/>
            <person name="Douka A."/>
            <person name="Voukelatou E."/>
            <person name="Milioni D."/>
            <person name="Hatzopoulos P."/>
            <person name="Piravandi E."/>
            <person name="Obermaier B."/>
            <person name="Hilbert H."/>
            <person name="Duesterhoeft A."/>
            <person name="Moores T."/>
            <person name="Jones J.D.G."/>
            <person name="Eneva T."/>
            <person name="Palme K."/>
            <person name="Benes V."/>
            <person name="Rechmann S."/>
            <person name="Ansorge W."/>
            <person name="Cooke R."/>
            <person name="Berger C."/>
            <person name="Delseny M."/>
            <person name="Voet M."/>
            <person name="Volckaert G."/>
            <person name="Mewes H.-W."/>
            <person name="Klosterman S."/>
            <person name="Schueller C."/>
            <person name="Chalwatzis N."/>
        </authorList>
    </citation>
    <scope>NUCLEOTIDE SEQUENCE [LARGE SCALE GENOMIC DNA]</scope>
    <source>
        <strain>cv. Columbia</strain>
    </source>
</reference>
<reference key="2">
    <citation type="journal article" date="1999" name="Nature">
        <title>Sequence and analysis of chromosome 4 of the plant Arabidopsis thaliana.</title>
        <authorList>
            <person name="Mayer K.F.X."/>
            <person name="Schueller C."/>
            <person name="Wambutt R."/>
            <person name="Murphy G."/>
            <person name="Volckaert G."/>
            <person name="Pohl T."/>
            <person name="Duesterhoeft A."/>
            <person name="Stiekema W."/>
            <person name="Entian K.-D."/>
            <person name="Terryn N."/>
            <person name="Harris B."/>
            <person name="Ansorge W."/>
            <person name="Brandt P."/>
            <person name="Grivell L.A."/>
            <person name="Rieger M."/>
            <person name="Weichselgartner M."/>
            <person name="de Simone V."/>
            <person name="Obermaier B."/>
            <person name="Mache R."/>
            <person name="Mueller M."/>
            <person name="Kreis M."/>
            <person name="Delseny M."/>
            <person name="Puigdomenech P."/>
            <person name="Watson M."/>
            <person name="Schmidtheini T."/>
            <person name="Reichert B."/>
            <person name="Portetelle D."/>
            <person name="Perez-Alonso M."/>
            <person name="Boutry M."/>
            <person name="Bancroft I."/>
            <person name="Vos P."/>
            <person name="Hoheisel J."/>
            <person name="Zimmermann W."/>
            <person name="Wedler H."/>
            <person name="Ridley P."/>
            <person name="Langham S.-A."/>
            <person name="McCullagh B."/>
            <person name="Bilham L."/>
            <person name="Robben J."/>
            <person name="van der Schueren J."/>
            <person name="Grymonprez B."/>
            <person name="Chuang Y.-J."/>
            <person name="Vandenbussche F."/>
            <person name="Braeken M."/>
            <person name="Weltjens I."/>
            <person name="Voet M."/>
            <person name="Bastiaens I."/>
            <person name="Aert R."/>
            <person name="Defoor E."/>
            <person name="Weitzenegger T."/>
            <person name="Bothe G."/>
            <person name="Ramsperger U."/>
            <person name="Hilbert H."/>
            <person name="Braun M."/>
            <person name="Holzer E."/>
            <person name="Brandt A."/>
            <person name="Peters S."/>
            <person name="van Staveren M."/>
            <person name="Dirkse W."/>
            <person name="Mooijman P."/>
            <person name="Klein Lankhorst R."/>
            <person name="Rose M."/>
            <person name="Hauf J."/>
            <person name="Koetter P."/>
            <person name="Berneiser S."/>
            <person name="Hempel S."/>
            <person name="Feldpausch M."/>
            <person name="Lamberth S."/>
            <person name="Van den Daele H."/>
            <person name="De Keyser A."/>
            <person name="Buysshaert C."/>
            <person name="Gielen J."/>
            <person name="Villarroel R."/>
            <person name="De Clercq R."/>
            <person name="van Montagu M."/>
            <person name="Rogers J."/>
            <person name="Cronin A."/>
            <person name="Quail M.A."/>
            <person name="Bray-Allen S."/>
            <person name="Clark L."/>
            <person name="Doggett J."/>
            <person name="Hall S."/>
            <person name="Kay M."/>
            <person name="Lennard N."/>
            <person name="McLay K."/>
            <person name="Mayes R."/>
            <person name="Pettett A."/>
            <person name="Rajandream M.A."/>
            <person name="Lyne M."/>
            <person name="Benes V."/>
            <person name="Rechmann S."/>
            <person name="Borkova D."/>
            <person name="Bloecker H."/>
            <person name="Scharfe M."/>
            <person name="Grimm M."/>
            <person name="Loehnert T.-H."/>
            <person name="Dose S."/>
            <person name="de Haan M."/>
            <person name="Maarse A.C."/>
            <person name="Schaefer M."/>
            <person name="Mueller-Auer S."/>
            <person name="Gabel C."/>
            <person name="Fuchs M."/>
            <person name="Fartmann B."/>
            <person name="Granderath K."/>
            <person name="Dauner D."/>
            <person name="Herzl A."/>
            <person name="Neumann S."/>
            <person name="Argiriou A."/>
            <person name="Vitale D."/>
            <person name="Liguori R."/>
            <person name="Piravandi E."/>
            <person name="Massenet O."/>
            <person name="Quigley F."/>
            <person name="Clabauld G."/>
            <person name="Muendlein A."/>
            <person name="Felber R."/>
            <person name="Schnabl S."/>
            <person name="Hiller R."/>
            <person name="Schmidt W."/>
            <person name="Lecharny A."/>
            <person name="Aubourg S."/>
            <person name="Chefdor F."/>
            <person name="Cooke R."/>
            <person name="Berger C."/>
            <person name="Monfort A."/>
            <person name="Casacuberta E."/>
            <person name="Gibbons T."/>
            <person name="Weber N."/>
            <person name="Vandenbol M."/>
            <person name="Bargues M."/>
            <person name="Terol J."/>
            <person name="Torres A."/>
            <person name="Perez-Perez A."/>
            <person name="Purnelle B."/>
            <person name="Bent E."/>
            <person name="Johnson S."/>
            <person name="Tacon D."/>
            <person name="Jesse T."/>
            <person name="Heijnen L."/>
            <person name="Schwarz S."/>
            <person name="Scholler P."/>
            <person name="Heber S."/>
            <person name="Francs P."/>
            <person name="Bielke C."/>
            <person name="Frishman D."/>
            <person name="Haase D."/>
            <person name="Lemcke K."/>
            <person name="Mewes H.-W."/>
            <person name="Stocker S."/>
            <person name="Zaccaria P."/>
            <person name="Bevan M."/>
            <person name="Wilson R.K."/>
            <person name="de la Bastide M."/>
            <person name="Habermann K."/>
            <person name="Parnell L."/>
            <person name="Dedhia N."/>
            <person name="Gnoj L."/>
            <person name="Schutz K."/>
            <person name="Huang E."/>
            <person name="Spiegel L."/>
            <person name="Sekhon M."/>
            <person name="Murray J."/>
            <person name="Sheet P."/>
            <person name="Cordes M."/>
            <person name="Abu-Threideh J."/>
            <person name="Stoneking T."/>
            <person name="Kalicki J."/>
            <person name="Graves T."/>
            <person name="Harmon G."/>
            <person name="Edwards J."/>
            <person name="Latreille P."/>
            <person name="Courtney L."/>
            <person name="Cloud J."/>
            <person name="Abbott A."/>
            <person name="Scott K."/>
            <person name="Johnson D."/>
            <person name="Minx P."/>
            <person name="Bentley D."/>
            <person name="Fulton B."/>
            <person name="Miller N."/>
            <person name="Greco T."/>
            <person name="Kemp K."/>
            <person name="Kramer J."/>
            <person name="Fulton L."/>
            <person name="Mardis E."/>
            <person name="Dante M."/>
            <person name="Pepin K."/>
            <person name="Hillier L.W."/>
            <person name="Nelson J."/>
            <person name="Spieth J."/>
            <person name="Ryan E."/>
            <person name="Andrews S."/>
            <person name="Geisel C."/>
            <person name="Layman D."/>
            <person name="Du H."/>
            <person name="Ali J."/>
            <person name="Berghoff A."/>
            <person name="Jones K."/>
            <person name="Drone K."/>
            <person name="Cotton M."/>
            <person name="Joshu C."/>
            <person name="Antonoiu B."/>
            <person name="Zidanic M."/>
            <person name="Strong C."/>
            <person name="Sun H."/>
            <person name="Lamar B."/>
            <person name="Yordan C."/>
            <person name="Ma P."/>
            <person name="Zhong J."/>
            <person name="Preston R."/>
            <person name="Vil D."/>
            <person name="Shekher M."/>
            <person name="Matero A."/>
            <person name="Shah R."/>
            <person name="Swaby I.K."/>
            <person name="O'Shaughnessy A."/>
            <person name="Rodriguez M."/>
            <person name="Hoffman J."/>
            <person name="Till S."/>
            <person name="Granat S."/>
            <person name="Shohdy N."/>
            <person name="Hasegawa A."/>
            <person name="Hameed A."/>
            <person name="Lodhi M."/>
            <person name="Johnson A."/>
            <person name="Chen E."/>
            <person name="Marra M.A."/>
            <person name="Martienssen R."/>
            <person name="McCombie W.R."/>
        </authorList>
    </citation>
    <scope>NUCLEOTIDE SEQUENCE [LARGE SCALE GENOMIC DNA]</scope>
    <source>
        <strain>cv. Columbia</strain>
    </source>
</reference>
<reference key="3">
    <citation type="journal article" date="2017" name="Plant J.">
        <title>Araport11: a complete reannotation of the Arabidopsis thaliana reference genome.</title>
        <authorList>
            <person name="Cheng C.Y."/>
            <person name="Krishnakumar V."/>
            <person name="Chan A.P."/>
            <person name="Thibaud-Nissen F."/>
            <person name="Schobel S."/>
            <person name="Town C.D."/>
        </authorList>
    </citation>
    <scope>GENOME REANNOTATION</scope>
    <source>
        <strain>cv. Columbia</strain>
    </source>
</reference>
<comment type="sequence caution" evidence="1">
    <conflict type="erroneous gene model prediction">
        <sequence resource="EMBL-CDS" id="CAB10501"/>
    </conflict>
</comment>
<name>FB234_ARATH</name>
<proteinExistence type="predicted"/>
<accession>Q9M0M7</accession>
<accession>O23563</accession>
<evidence type="ECO:0000305" key="1"/>
<organism>
    <name type="scientific">Arabidopsis thaliana</name>
    <name type="common">Mouse-ear cress</name>
    <dbReference type="NCBI Taxonomy" id="3702"/>
    <lineage>
        <taxon>Eukaryota</taxon>
        <taxon>Viridiplantae</taxon>
        <taxon>Streptophyta</taxon>
        <taxon>Embryophyta</taxon>
        <taxon>Tracheophyta</taxon>
        <taxon>Spermatophyta</taxon>
        <taxon>Magnoliopsida</taxon>
        <taxon>eudicotyledons</taxon>
        <taxon>Gunneridae</taxon>
        <taxon>Pentapetalae</taxon>
        <taxon>rosids</taxon>
        <taxon>malvids</taxon>
        <taxon>Brassicales</taxon>
        <taxon>Brassicaceae</taxon>
        <taxon>Camelineae</taxon>
        <taxon>Arabidopsis</taxon>
    </lineage>
</organism>
<dbReference type="EMBL" id="Z97343">
    <property type="protein sequence ID" value="CAB10501.1"/>
    <property type="status" value="ALT_SEQ"/>
    <property type="molecule type" value="Genomic_DNA"/>
</dbReference>
<dbReference type="EMBL" id="AL161546">
    <property type="protein sequence ID" value="CAB78723.1"/>
    <property type="molecule type" value="Genomic_DNA"/>
</dbReference>
<dbReference type="EMBL" id="CP002687">
    <property type="protein sequence ID" value="AEE83861.1"/>
    <property type="molecule type" value="Genomic_DNA"/>
</dbReference>
<dbReference type="PIR" id="H71440">
    <property type="entry name" value="H71440"/>
</dbReference>
<dbReference type="RefSeq" id="NP_193453.1">
    <property type="nucleotide sequence ID" value="NM_117824.1"/>
</dbReference>
<dbReference type="SMR" id="Q9M0M7"/>
<dbReference type="BioGRID" id="12724">
    <property type="interactions" value="4"/>
</dbReference>
<dbReference type="PaxDb" id="3702-AT4G17200.1"/>
<dbReference type="EnsemblPlants" id="AT4G17200.1">
    <property type="protein sequence ID" value="AT4G17200.1"/>
    <property type="gene ID" value="AT4G17200"/>
</dbReference>
<dbReference type="GeneID" id="827431"/>
<dbReference type="Gramene" id="AT4G17200.1">
    <property type="protein sequence ID" value="AT4G17200.1"/>
    <property type="gene ID" value="AT4G17200"/>
</dbReference>
<dbReference type="KEGG" id="ath:AT4G17200"/>
<dbReference type="Araport" id="AT4G17200"/>
<dbReference type="TAIR" id="AT4G17200"/>
<dbReference type="HOGENOM" id="CLU_034692_0_0_1"/>
<dbReference type="InParanoid" id="Q9M0M7"/>
<dbReference type="OMA" id="WIQPKKA"/>
<dbReference type="PhylomeDB" id="Q9M0M7"/>
<dbReference type="PRO" id="PR:Q9M0M7"/>
<dbReference type="Proteomes" id="UP000006548">
    <property type="component" value="Chromosome 4"/>
</dbReference>
<dbReference type="ExpressionAtlas" id="Q9M0M7">
    <property type="expression patterns" value="baseline and differential"/>
</dbReference>
<dbReference type="InterPro" id="IPR006527">
    <property type="entry name" value="F-box-assoc_dom_typ1"/>
</dbReference>
<dbReference type="InterPro" id="IPR017451">
    <property type="entry name" value="F-box-assoc_interact_dom"/>
</dbReference>
<dbReference type="InterPro" id="IPR036047">
    <property type="entry name" value="F-box-like_dom_sf"/>
</dbReference>
<dbReference type="InterPro" id="IPR001810">
    <property type="entry name" value="F-box_dom"/>
</dbReference>
<dbReference type="InterPro" id="IPR011043">
    <property type="entry name" value="Gal_Oxase/kelch_b-propeller"/>
</dbReference>
<dbReference type="InterPro" id="IPR050796">
    <property type="entry name" value="SCF_F-box_component"/>
</dbReference>
<dbReference type="NCBIfam" id="TIGR01640">
    <property type="entry name" value="F_box_assoc_1"/>
    <property type="match status" value="1"/>
</dbReference>
<dbReference type="PANTHER" id="PTHR31672">
    <property type="entry name" value="BNACNNG10540D PROTEIN"/>
    <property type="match status" value="1"/>
</dbReference>
<dbReference type="PANTHER" id="PTHR31672:SF13">
    <property type="entry name" value="F-BOX PROTEIN CPR30-LIKE"/>
    <property type="match status" value="1"/>
</dbReference>
<dbReference type="Pfam" id="PF00646">
    <property type="entry name" value="F-box"/>
    <property type="match status" value="1"/>
</dbReference>
<dbReference type="Pfam" id="PF07734">
    <property type="entry name" value="FBA_1"/>
    <property type="match status" value="1"/>
</dbReference>
<dbReference type="SMART" id="SM00256">
    <property type="entry name" value="FBOX"/>
    <property type="match status" value="1"/>
</dbReference>
<dbReference type="SUPFAM" id="SSF81383">
    <property type="entry name" value="F-box domain"/>
    <property type="match status" value="1"/>
</dbReference>
<dbReference type="SUPFAM" id="SSF50965">
    <property type="entry name" value="Galactose oxidase, central domain"/>
    <property type="match status" value="1"/>
</dbReference>
<feature type="chain" id="PRO_0000283503" description="Putative F-box protein At4g17200">
    <location>
        <begin position="1"/>
        <end position="381"/>
    </location>
</feature>
<feature type="domain" description="F-box">
    <location>
        <begin position="1"/>
        <end position="47"/>
    </location>
</feature>
<protein>
    <recommendedName>
        <fullName>Putative F-box protein At4g17200</fullName>
    </recommendedName>
</protein>
<sequence>MTTMSDLSPDLVGEILTRVPMTSLISVRCTCKMWNALSKEGIFFKAARKQFMGFTMMDSRVCSMKFDLQGIRNNEHDFVDPCIKQIAKLDQIEVSKVLQCDGLLLCVGKDNSRLLVWNPYLGQTRFIKPRKRFNKLEWYALGYDNNHNYKILMNYDTGHLFGYEIYDFSSDSWRVLDVSPDCHIPFHQQSVSLNGNTYFLAQEKIIVEGEEEEVVDEIEKFLLCFDFTTERFGPRLPLPFHSDVLETVAISCVRDDQLAVLYQRFETWEIWVTTKIDPTAVSWSMFLSVDMEPPTGCQFDDEAGSFFIDEENKVAVFFNSDLFNPRVENRNRRYPTAYIIGQDGYFKSATLREAPDLVKPDPYVYCCPLVWSSYAPSLVQL</sequence>
<keyword id="KW-1185">Reference proteome</keyword>